<name>CO2A1_XENTR</name>
<reference key="1">
    <citation type="submission" date="2003-12" db="EMBL/GenBank/DDBJ databases">
        <authorList>
            <consortium name="NIH - Xenopus Gene Collection (XGC) project"/>
        </authorList>
    </citation>
    <scope>NUCLEOTIDE SEQUENCE [LARGE SCALE MRNA]</scope>
    <source>
        <tissue>Embryo</tissue>
    </source>
</reference>
<keyword id="KW-0106">Calcium</keyword>
<keyword id="KW-0176">Collagen</keyword>
<keyword id="KW-1015">Disulfide bond</keyword>
<keyword id="KW-0272">Extracellular matrix</keyword>
<keyword id="KW-0325">Glycoprotein</keyword>
<keyword id="KW-0379">Hydroxylation</keyword>
<keyword id="KW-0479">Metal-binding</keyword>
<keyword id="KW-1185">Reference proteome</keyword>
<keyword id="KW-0677">Repeat</keyword>
<keyword id="KW-0964">Secreted</keyword>
<keyword id="KW-0732">Signal</keyword>
<gene>
    <name evidence="2" type="primary">col2a1</name>
</gene>
<dbReference type="EMBL" id="BC063191">
    <property type="protein sequence ID" value="AAH63191.1"/>
    <property type="molecule type" value="mRNA"/>
</dbReference>
<dbReference type="RefSeq" id="NP_989220.1">
    <property type="nucleotide sequence ID" value="NM_203889.1"/>
</dbReference>
<dbReference type="SMR" id="Q6P4Z2"/>
<dbReference type="FunCoup" id="Q6P4Z2">
    <property type="interactions" value="569"/>
</dbReference>
<dbReference type="STRING" id="8364.ENSXETP00000052787"/>
<dbReference type="GlyCosmos" id="Q6P4Z2">
    <property type="glycosylation" value="1 site, No reported glycans"/>
</dbReference>
<dbReference type="PaxDb" id="8364-ENSXETP00000043834"/>
<dbReference type="GeneID" id="394828"/>
<dbReference type="KEGG" id="xtr:394828"/>
<dbReference type="AGR" id="Xenbase:XB-GENE-6258353"/>
<dbReference type="CTD" id="1280"/>
<dbReference type="Xenbase" id="XB-GENE-6258353">
    <property type="gene designation" value="col2a1"/>
</dbReference>
<dbReference type="eggNOG" id="KOG3544">
    <property type="taxonomic scope" value="Eukaryota"/>
</dbReference>
<dbReference type="InParanoid" id="Q6P4Z2"/>
<dbReference type="OMA" id="EAGRHQH"/>
<dbReference type="OrthoDB" id="8939548at2759"/>
<dbReference type="Reactome" id="R-XTR-1442490">
    <property type="pathway name" value="Collagen degradation"/>
</dbReference>
<dbReference type="Reactome" id="R-XTR-1474244">
    <property type="pathway name" value="Extracellular matrix organization"/>
</dbReference>
<dbReference type="Reactome" id="R-XTR-1650814">
    <property type="pathway name" value="Collagen biosynthesis and modifying enzymes"/>
</dbReference>
<dbReference type="Reactome" id="R-XTR-186797">
    <property type="pathway name" value="Signaling by PDGF"/>
</dbReference>
<dbReference type="Reactome" id="R-XTR-198933">
    <property type="pathway name" value="Immunoregulatory interactions between a Lymphoid and a non-Lymphoid cell"/>
</dbReference>
<dbReference type="Reactome" id="R-XTR-2022090">
    <property type="pathway name" value="Assembly of collagen fibrils and other multimeric structures"/>
</dbReference>
<dbReference type="Reactome" id="R-XTR-216083">
    <property type="pathway name" value="Integrin cell surface interactions"/>
</dbReference>
<dbReference type="Reactome" id="R-XTR-3000171">
    <property type="pathway name" value="Non-integrin membrane-ECM interactions"/>
</dbReference>
<dbReference type="Reactome" id="R-XTR-3000178">
    <property type="pathway name" value="ECM proteoglycans"/>
</dbReference>
<dbReference type="Reactome" id="R-XTR-8948216">
    <property type="pathway name" value="Collagen chain trimerization"/>
</dbReference>
<dbReference type="Proteomes" id="UP000008143">
    <property type="component" value="Chromosome 2"/>
</dbReference>
<dbReference type="Bgee" id="ENSXETG00000010655">
    <property type="expression patterns" value="Expressed in neurula embryo and 21 other cell types or tissues"/>
</dbReference>
<dbReference type="GO" id="GO:0005581">
    <property type="term" value="C:collagen trimer"/>
    <property type="evidence" value="ECO:0007669"/>
    <property type="project" value="UniProtKB-KW"/>
</dbReference>
<dbReference type="GO" id="GO:0005576">
    <property type="term" value="C:extracellular region"/>
    <property type="evidence" value="ECO:0007669"/>
    <property type="project" value="UniProtKB-KW"/>
</dbReference>
<dbReference type="GO" id="GO:0005201">
    <property type="term" value="F:extracellular matrix structural constituent"/>
    <property type="evidence" value="ECO:0007669"/>
    <property type="project" value="InterPro"/>
</dbReference>
<dbReference type="GO" id="GO:0046872">
    <property type="term" value="F:metal ion binding"/>
    <property type="evidence" value="ECO:0007669"/>
    <property type="project" value="UniProtKB-KW"/>
</dbReference>
<dbReference type="FunFam" id="2.60.120.1000:FF:000001">
    <property type="entry name" value="Collagen alpha-1 type I chain"/>
    <property type="match status" value="1"/>
</dbReference>
<dbReference type="FunFam" id="2.10.70.10:FF:000013">
    <property type="entry name" value="Collagen, type I, alpha 1"/>
    <property type="match status" value="1"/>
</dbReference>
<dbReference type="Gene3D" id="2.60.120.1000">
    <property type="match status" value="1"/>
</dbReference>
<dbReference type="Gene3D" id="2.10.70.10">
    <property type="entry name" value="Complement Module, domain 1"/>
    <property type="match status" value="1"/>
</dbReference>
<dbReference type="InterPro" id="IPR008160">
    <property type="entry name" value="Collagen"/>
</dbReference>
<dbReference type="InterPro" id="IPR050149">
    <property type="entry name" value="Collagen_superfamily"/>
</dbReference>
<dbReference type="InterPro" id="IPR000885">
    <property type="entry name" value="Fib_collagen_C"/>
</dbReference>
<dbReference type="InterPro" id="IPR001007">
    <property type="entry name" value="VWF_dom"/>
</dbReference>
<dbReference type="PANTHER" id="PTHR24023">
    <property type="entry name" value="COLLAGEN ALPHA"/>
    <property type="match status" value="1"/>
</dbReference>
<dbReference type="PANTHER" id="PTHR24023:SF58">
    <property type="entry name" value="COLLAGEN ALPHA-1(II) CHAIN"/>
    <property type="match status" value="1"/>
</dbReference>
<dbReference type="Pfam" id="PF01410">
    <property type="entry name" value="COLFI"/>
    <property type="match status" value="1"/>
</dbReference>
<dbReference type="Pfam" id="PF01391">
    <property type="entry name" value="Collagen"/>
    <property type="match status" value="8"/>
</dbReference>
<dbReference type="Pfam" id="PF00093">
    <property type="entry name" value="VWC"/>
    <property type="match status" value="1"/>
</dbReference>
<dbReference type="SMART" id="SM00038">
    <property type="entry name" value="COLFI"/>
    <property type="match status" value="1"/>
</dbReference>
<dbReference type="SMART" id="SM00214">
    <property type="entry name" value="VWC"/>
    <property type="match status" value="1"/>
</dbReference>
<dbReference type="SUPFAM" id="SSF57603">
    <property type="entry name" value="FnI-like domain"/>
    <property type="match status" value="1"/>
</dbReference>
<dbReference type="PROSITE" id="PS51461">
    <property type="entry name" value="NC1_FIB"/>
    <property type="match status" value="1"/>
</dbReference>
<dbReference type="PROSITE" id="PS01208">
    <property type="entry name" value="VWFC_1"/>
    <property type="match status" value="1"/>
</dbReference>
<dbReference type="PROSITE" id="PS50184">
    <property type="entry name" value="VWFC_2"/>
    <property type="match status" value="1"/>
</dbReference>
<sequence length="1492" mass="142696">MFSFVDSRTLVLFAATQVILLAVVRCQDEEDVLATGSCVQHGQRYSDKDVWKPEPCQICVCDTGNVLCDEIICEDPKDCPNAEIPFGECCPICPTEQSSTSSGQGVLKGQKGEPGDIKDVVGPKGPPGPQGPSGEQGPRGDRGDKGEKGAPGPRGRDGEPGTPGNPGPVGPPGPPGPPGLGGNFAAQMTGGFDEKAGGAQMGVMQGPMGPMGPRGPPGPTGAPGPQGFQGNPGEPGEPGAGGPMGPRGPPGPAGKPGDDGEAGKPGKSGERGPPGPQGARGFPGTPGLPGVKGHRGYPGLDGSKGEAGAAGAKGEGGATGEAGSPGPMGPRGLPGERGRPGASGAAGARGNDGLPGPAGPPGPVGPAGAPGFPGAPGSKGEAGPTGARGPEGAQGPRGESGTPGSPGPAGASGNPGTDGIPGAKGSSGAPGIAGAPGFPGPRGPPGPQGATGPLGPKGQTGDPGVAGFKGEHGPKGEIGSAGPQGAPGPAGEEGKRGARGEPGAAGPLGPPGERGAPGNRGFPGQDGLAGPKGAPGERGVPGLGGPKGANGDPGRPGEPGLPGARGLTGRPGDAGPQGKVGPSGASGEDGRPGPPGPQGARGQPGVMGFPGPKGANGEPGKAGEKGLLGAPGLRGLPGKDGETGAQGPNGPAGPAGERGEQGPPGPSGFQGLPGPPGSPGEGGKPGDQGVPGEAGAPGLVGPRGERGFPGERGSSGPQGLQGPRGLPGTPGTDGPKGATGPSGPNGAQGPPGLQGMPGERGAAGISGPKGDRGDTGEKGPEGAPGKDGSRGLTGPIGPPGPSGPNGEKGESGPSGPAGIVGARGAPGDRGETGPPGPAGFAGPPGADGQAGLKGDQGESGQKGDAGAPGPQGPSGAPGPQGPTGVNGPKGARGAQGPPGATGFPGAAGRVGPPGPNGNPGPSGAPGSAGKEGPKGARGDAGPTGRAGDPGLQGPAGVPGEKGESGEDGPSGPDGPPGPQGLSGQRGIVGLPGQRGERGFPGLPGPSGEPGKQGGPGSAGDRGPPGPVGPPGLTGPAGEPGREGNAGSDGPPGRDGATGIKGDRGETGPLGAPGAPGAPGAPGPVGPTGKQGDRGESGPQGPLGPSGPAGARGLPGPQGPRGDKGEAGEAGERGQKGHRGFTGLQGLPGPPGTAGDQGASGPAGPGGPRGPPGPVGPSGKDGSNGLPGPIGPPGPRGRGGETGPAGPPGQPGPPGPPGPPGPGIDMSAFAGLSQPEKGPDPMRYMRADQASSSVPQRDVDVEATLKSLNNQIESIRSPDGTKKNPARTCRDLKLCHPEWKSGDYWIDPNQGCTVDAIKVFCNMETGETCVYPNPSKIPKKNWWSAKGKEKKHIWFGETINGGFQFSYGDDSSAPNTANIQMTFLRLLSTDATQNITYHCKNSIAFMDEASGNLKKAVLLQGSNDVEIRAEGNSRFTYNALEDGCKKHTGKWSKTVIEYRTQKTSRLPIVDIAPMDIGGADQEFGVDIGPVCFL</sequence>
<proteinExistence type="evidence at transcript level"/>
<protein>
    <recommendedName>
        <fullName evidence="2">Collagen alpha-1(II) chain</fullName>
    </recommendedName>
    <alternativeName>
        <fullName evidence="2">Alpha-1 type II collagen</fullName>
    </alternativeName>
</protein>
<evidence type="ECO:0000250" key="1"/>
<evidence type="ECO:0000250" key="2">
    <source>
        <dbReference type="UniProtKB" id="P02458"/>
    </source>
</evidence>
<evidence type="ECO:0000250" key="3">
    <source>
        <dbReference type="UniProtKB" id="P05539"/>
    </source>
</evidence>
<evidence type="ECO:0000255" key="4"/>
<evidence type="ECO:0000255" key="5">
    <source>
        <dbReference type="PROSITE-ProRule" id="PRU00220"/>
    </source>
</evidence>
<evidence type="ECO:0000255" key="6">
    <source>
        <dbReference type="PROSITE-ProRule" id="PRU00793"/>
    </source>
</evidence>
<evidence type="ECO:0000256" key="7">
    <source>
        <dbReference type="SAM" id="MobiDB-lite"/>
    </source>
</evidence>
<accession>Q6P4Z2</accession>
<feature type="signal peptide" evidence="4">
    <location>
        <begin position="1"/>
        <end position="26"/>
    </location>
</feature>
<feature type="propeptide" id="PRO_0000286181" description="N-terminal propeptide" evidence="1">
    <location>
        <begin position="27"/>
        <end position="186"/>
    </location>
</feature>
<feature type="chain" id="PRO_0000286182" description="Collagen alpha-1(II) chain">
    <location>
        <begin position="187"/>
        <end position="1246"/>
    </location>
</feature>
<feature type="propeptide" id="PRO_0000286183" description="C-terminal propeptide" evidence="1">
    <location>
        <begin position="1247"/>
        <end position="1492"/>
    </location>
</feature>
<feature type="domain" description="VWFC" evidence="5">
    <location>
        <begin position="36"/>
        <end position="94"/>
    </location>
</feature>
<feature type="domain" description="Fibrillar collagen NC1" evidence="6">
    <location>
        <begin position="1258"/>
        <end position="1492"/>
    </location>
</feature>
<feature type="region of interest" description="Disordered" evidence="7">
    <location>
        <begin position="98"/>
        <end position="1255"/>
    </location>
</feature>
<feature type="region of interest" description="Triple-helical region">
    <location>
        <begin position="206"/>
        <end position="1219"/>
    </location>
</feature>
<feature type="region of interest" description="Nonhelical region (C-terminal)">
    <location>
        <begin position="1220"/>
        <end position="1246"/>
    </location>
</feature>
<feature type="compositionally biased region" description="Basic and acidic residues" evidence="7">
    <location>
        <begin position="110"/>
        <end position="121"/>
    </location>
</feature>
<feature type="compositionally biased region" description="Basic and acidic residues" evidence="7">
    <location>
        <begin position="138"/>
        <end position="159"/>
    </location>
</feature>
<feature type="compositionally biased region" description="Pro residues" evidence="7">
    <location>
        <begin position="163"/>
        <end position="178"/>
    </location>
</feature>
<feature type="compositionally biased region" description="Low complexity" evidence="7">
    <location>
        <begin position="197"/>
        <end position="208"/>
    </location>
</feature>
<feature type="compositionally biased region" description="Pro residues" evidence="7">
    <location>
        <begin position="213"/>
        <end position="222"/>
    </location>
</feature>
<feature type="compositionally biased region" description="Low complexity" evidence="7">
    <location>
        <begin position="223"/>
        <end position="234"/>
    </location>
</feature>
<feature type="compositionally biased region" description="Gly residues" evidence="7">
    <location>
        <begin position="236"/>
        <end position="245"/>
    </location>
</feature>
<feature type="compositionally biased region" description="Basic and acidic residues" evidence="7">
    <location>
        <begin position="256"/>
        <end position="270"/>
    </location>
</feature>
<feature type="compositionally biased region" description="Gly residues" evidence="7">
    <location>
        <begin position="311"/>
        <end position="320"/>
    </location>
</feature>
<feature type="compositionally biased region" description="Low complexity" evidence="7">
    <location>
        <begin position="321"/>
        <end position="333"/>
    </location>
</feature>
<feature type="compositionally biased region" description="Low complexity" evidence="7">
    <location>
        <begin position="340"/>
        <end position="355"/>
    </location>
</feature>
<feature type="compositionally biased region" description="Low complexity" evidence="7">
    <location>
        <begin position="366"/>
        <end position="376"/>
    </location>
</feature>
<feature type="compositionally biased region" description="Low complexity" evidence="7">
    <location>
        <begin position="396"/>
        <end position="436"/>
    </location>
</feature>
<feature type="compositionally biased region" description="Pro residues" evidence="7">
    <location>
        <begin position="438"/>
        <end position="447"/>
    </location>
</feature>
<feature type="compositionally biased region" description="Low complexity" evidence="7">
    <location>
        <begin position="480"/>
        <end position="490"/>
    </location>
</feature>
<feature type="compositionally biased region" description="Low complexity" evidence="7">
    <location>
        <begin position="501"/>
        <end position="517"/>
    </location>
</feature>
<feature type="compositionally biased region" description="Gly residues" evidence="7">
    <location>
        <begin position="539"/>
        <end position="548"/>
    </location>
</feature>
<feature type="compositionally biased region" description="Low complexity" evidence="7">
    <location>
        <begin position="627"/>
        <end position="636"/>
    </location>
</feature>
<feature type="compositionally biased region" description="Low complexity" evidence="7">
    <location>
        <begin position="645"/>
        <end position="655"/>
    </location>
</feature>
<feature type="compositionally biased region" description="Low complexity" evidence="7">
    <location>
        <begin position="711"/>
        <end position="741"/>
    </location>
</feature>
<feature type="compositionally biased region" description="Basic and acidic residues" evidence="7">
    <location>
        <begin position="769"/>
        <end position="780"/>
    </location>
</feature>
<feature type="compositionally biased region" description="Low complexity" evidence="7">
    <location>
        <begin position="838"/>
        <end position="850"/>
    </location>
</feature>
<feature type="compositionally biased region" description="Low complexity" evidence="7">
    <location>
        <begin position="894"/>
        <end position="910"/>
    </location>
</feature>
<feature type="compositionally biased region" description="Low complexity" evidence="7">
    <location>
        <begin position="919"/>
        <end position="930"/>
    </location>
</feature>
<feature type="compositionally biased region" description="Gly residues" evidence="7">
    <location>
        <begin position="1010"/>
        <end position="1019"/>
    </location>
</feature>
<feature type="compositionally biased region" description="Low complexity" evidence="7">
    <location>
        <begin position="1105"/>
        <end position="1114"/>
    </location>
</feature>
<feature type="compositionally biased region" description="Basic and acidic residues" evidence="7">
    <location>
        <begin position="1120"/>
        <end position="1134"/>
    </location>
</feature>
<feature type="compositionally biased region" description="Low complexity" evidence="7">
    <location>
        <begin position="1140"/>
        <end position="1159"/>
    </location>
</feature>
<feature type="compositionally biased region" description="Low complexity" evidence="7">
    <location>
        <begin position="1176"/>
        <end position="1186"/>
    </location>
</feature>
<feature type="compositionally biased region" description="Pro residues" evidence="7">
    <location>
        <begin position="1204"/>
        <end position="1221"/>
    </location>
</feature>
<feature type="compositionally biased region" description="Basic and acidic residues" evidence="7">
    <location>
        <begin position="1236"/>
        <end position="1245"/>
    </location>
</feature>
<feature type="binding site" evidence="1">
    <location>
        <position position="1306"/>
    </location>
    <ligand>
        <name>Ca(2+)</name>
        <dbReference type="ChEBI" id="CHEBI:29108"/>
    </ligand>
</feature>
<feature type="binding site" evidence="1">
    <location>
        <position position="1308"/>
    </location>
    <ligand>
        <name>Ca(2+)</name>
        <dbReference type="ChEBI" id="CHEBI:29108"/>
    </ligand>
</feature>
<feature type="binding site" evidence="1">
    <location>
        <position position="1309"/>
    </location>
    <ligand>
        <name>Ca(2+)</name>
        <dbReference type="ChEBI" id="CHEBI:29108"/>
    </ligand>
</feature>
<feature type="binding site" evidence="1">
    <location>
        <position position="1311"/>
    </location>
    <ligand>
        <name>Ca(2+)</name>
        <dbReference type="ChEBI" id="CHEBI:29108"/>
    </ligand>
</feature>
<feature type="binding site" evidence="1">
    <location>
        <position position="1314"/>
    </location>
    <ligand>
        <name>Ca(2+)</name>
        <dbReference type="ChEBI" id="CHEBI:29108"/>
    </ligand>
</feature>
<feature type="site" description="Cleavage; by procollagen N-endopeptidase" evidence="1">
    <location>
        <begin position="186"/>
        <end position="187"/>
    </location>
</feature>
<feature type="site" description="Cleavage; by procollagen C-endopeptidase" evidence="1">
    <location>
        <begin position="1246"/>
        <end position="1247"/>
    </location>
</feature>
<feature type="modified residue" description="4-hydroxyproline" evidence="3">
    <location>
        <position position="664"/>
    </location>
</feature>
<feature type="modified residue" description="4-hydroxyproline" evidence="3">
    <location>
        <position position="673"/>
    </location>
</feature>
<feature type="modified residue" description="3-hydroxyproline" evidence="3">
    <location>
        <position position="675"/>
    </location>
</feature>
<feature type="modified residue" description="4-hydroxyproline" evidence="3">
    <location>
        <position position="676"/>
    </location>
</feature>
<feature type="modified residue" description="4-hydroxyproline" evidence="3">
    <location>
        <position position="679"/>
    </location>
</feature>
<feature type="modified residue" description="3-hydroxyproline" evidence="3">
    <location>
        <position position="912"/>
    </location>
</feature>
<feature type="modified residue" description="4-hydroxyproline" evidence="3">
    <location>
        <position position="913"/>
    </location>
</feature>
<feature type="modified residue" description="4-hydroxyproline" evidence="3">
    <location>
        <position position="919"/>
    </location>
</feature>
<feature type="modified residue" description="4-hydroxyproline" evidence="3">
    <location>
        <position position="925"/>
    </location>
</feature>
<feature type="modified residue" description="3-hydroxyproline" evidence="3">
    <location>
        <position position="1149"/>
    </location>
</feature>
<feature type="modified residue" description="4-hydroxyproline" evidence="3">
    <location>
        <position position="1186"/>
    </location>
</feature>
<feature type="modified residue" description="3-hydroxyproline" evidence="3">
    <location>
        <position position="1191"/>
    </location>
</feature>
<feature type="modified residue" description="4-hydroxyproline" evidence="3">
    <location>
        <position position="1192"/>
    </location>
</feature>
<feature type="modified residue" description="3-hydroxyproline" evidence="3">
    <location>
        <position position="1206"/>
    </location>
</feature>
<feature type="modified residue" description="4-hydroxyproline" evidence="3">
    <location>
        <position position="1207"/>
    </location>
</feature>
<feature type="modified residue" description="4-hydroxyproline" evidence="3">
    <location>
        <position position="1210"/>
    </location>
</feature>
<feature type="modified residue" description="3-hydroxyproline" evidence="3">
    <location>
        <position position="1212"/>
    </location>
</feature>
<feature type="modified residue" description="4-hydroxyproline" evidence="3">
    <location>
        <position position="1213"/>
    </location>
</feature>
<feature type="modified residue" description="4-hydroxyproline" evidence="3">
    <location>
        <position position="1216"/>
    </location>
</feature>
<feature type="modified residue" description="3-hydroxyproline" evidence="3">
    <location>
        <position position="1218"/>
    </location>
</feature>
<feature type="modified residue" description="4-hydroxyproline" evidence="3">
    <location>
        <position position="1219"/>
    </location>
</feature>
<feature type="glycosylation site" description="N-linked (GlcNAc...) asparagine" evidence="4">
    <location>
        <position position="1393"/>
    </location>
</feature>
<feature type="disulfide bond" evidence="6">
    <location>
        <begin position="1288"/>
        <end position="1320"/>
    </location>
</feature>
<feature type="disulfide bond" description="Interchain (with C-1311)" evidence="6">
    <location>
        <position position="1294"/>
    </location>
</feature>
<feature type="disulfide bond" description="Interchain (with C-1294)" evidence="6">
    <location>
        <position position="1311"/>
    </location>
</feature>
<feature type="disulfide bond" evidence="6">
    <location>
        <begin position="1328"/>
        <end position="1490"/>
    </location>
</feature>
<feature type="disulfide bond" evidence="6">
    <location>
        <begin position="1398"/>
        <end position="1443"/>
    </location>
</feature>
<comment type="function">
    <text evidence="1">Type II collagen is specific for cartilaginous tissues. It is essential for the normal embryonic development of the skeleton, for linear growth and for the ability of cartilage to resist compressive forces (By similarity).</text>
</comment>
<comment type="subunit">
    <text evidence="1">Homotrimers of alpha 1(II) chains.</text>
</comment>
<comment type="subcellular location">
    <subcellularLocation>
        <location evidence="6">Secreted</location>
        <location evidence="6">Extracellular space</location>
        <location evidence="6">Extracellular matrix</location>
    </subcellularLocation>
</comment>
<comment type="domain">
    <text evidence="1">The C-terminal propeptide, also known as COLFI domain, have crucial roles in tissue growth and repair by controlling both the intracellular assembly of procollagen molecules and the extracellular assembly of collagen fibrils. It binds a calcium ion which is essential for its function (By similarity).</text>
</comment>
<comment type="PTM">
    <text evidence="3">Contains mostly 4-hydroxyproline. Prolines at the third position of the tripeptide repeating unit (G-X-P) are 4-hydroxylated in some or all of the chains.</text>
</comment>
<comment type="PTM">
    <text evidence="3">Contains 3-hydroxyproline at a few sites. This modification occurs on the first proline residue in the sequence motif Gly-Pro-Hyp, where Hyp is 4-hydroxyproline.</text>
</comment>
<comment type="PTM">
    <text evidence="3">Lysine residues at the third position of the tripeptide repeating unit (G-X-Y) are 5-hydroxylated in some or all of the chains.</text>
</comment>
<comment type="PTM">
    <text evidence="3">O-glycosylated on hydroxylated lysine residues. The O-linked glycan consists of a Glc-Gal disaccharide.</text>
</comment>
<comment type="similarity">
    <text evidence="6">Belongs to the fibrillar collagen family.</text>
</comment>
<organism>
    <name type="scientific">Xenopus tropicalis</name>
    <name type="common">Western clawed frog</name>
    <name type="synonym">Silurana tropicalis</name>
    <dbReference type="NCBI Taxonomy" id="8364"/>
    <lineage>
        <taxon>Eukaryota</taxon>
        <taxon>Metazoa</taxon>
        <taxon>Chordata</taxon>
        <taxon>Craniata</taxon>
        <taxon>Vertebrata</taxon>
        <taxon>Euteleostomi</taxon>
        <taxon>Amphibia</taxon>
        <taxon>Batrachia</taxon>
        <taxon>Anura</taxon>
        <taxon>Pipoidea</taxon>
        <taxon>Pipidae</taxon>
        <taxon>Xenopodinae</taxon>
        <taxon>Xenopus</taxon>
        <taxon>Silurana</taxon>
    </lineage>
</organism>